<keyword id="KW-0520">NAD</keyword>
<keyword id="KW-0560">Oxidoreductase</keyword>
<keyword id="KW-1185">Reference proteome</keyword>
<keyword id="KW-0816">Tricarboxylic acid cycle</keyword>
<protein>
    <recommendedName>
        <fullName evidence="1">Malate dehydrogenase</fullName>
        <ecNumber evidence="1">1.1.1.37</ecNumber>
    </recommendedName>
</protein>
<comment type="function">
    <text evidence="1">Catalyzes the reversible oxidation of malate to oxaloacetate.</text>
</comment>
<comment type="catalytic activity">
    <reaction evidence="1">
        <text>(S)-malate + NAD(+) = oxaloacetate + NADH + H(+)</text>
        <dbReference type="Rhea" id="RHEA:21432"/>
        <dbReference type="ChEBI" id="CHEBI:15378"/>
        <dbReference type="ChEBI" id="CHEBI:15589"/>
        <dbReference type="ChEBI" id="CHEBI:16452"/>
        <dbReference type="ChEBI" id="CHEBI:57540"/>
        <dbReference type="ChEBI" id="CHEBI:57945"/>
        <dbReference type="EC" id="1.1.1.37"/>
    </reaction>
</comment>
<comment type="subunit">
    <text evidence="1">Homodimer.</text>
</comment>
<comment type="similarity">
    <text evidence="1">Belongs to the LDH/MDH superfamily. MDH type 1 family.</text>
</comment>
<dbReference type="EC" id="1.1.1.37" evidence="1"/>
<dbReference type="EMBL" id="AE017340">
    <property type="protein sequence ID" value="AAV81315.1"/>
    <property type="molecule type" value="Genomic_DNA"/>
</dbReference>
<dbReference type="RefSeq" id="WP_011233733.1">
    <property type="nucleotide sequence ID" value="NC_006512.1"/>
</dbReference>
<dbReference type="SMR" id="Q5R030"/>
<dbReference type="STRING" id="283942.IL0472"/>
<dbReference type="GeneID" id="41335623"/>
<dbReference type="KEGG" id="ilo:IL0472"/>
<dbReference type="eggNOG" id="COG0039">
    <property type="taxonomic scope" value="Bacteria"/>
</dbReference>
<dbReference type="HOGENOM" id="CLU_047181_1_0_6"/>
<dbReference type="OrthoDB" id="9802969at2"/>
<dbReference type="Proteomes" id="UP000001171">
    <property type="component" value="Chromosome"/>
</dbReference>
<dbReference type="GO" id="GO:0005737">
    <property type="term" value="C:cytoplasm"/>
    <property type="evidence" value="ECO:0007669"/>
    <property type="project" value="TreeGrafter"/>
</dbReference>
<dbReference type="GO" id="GO:0030060">
    <property type="term" value="F:L-malate dehydrogenase (NAD+) activity"/>
    <property type="evidence" value="ECO:0007669"/>
    <property type="project" value="UniProtKB-UniRule"/>
</dbReference>
<dbReference type="GO" id="GO:0006108">
    <property type="term" value="P:malate metabolic process"/>
    <property type="evidence" value="ECO:0007669"/>
    <property type="project" value="InterPro"/>
</dbReference>
<dbReference type="GO" id="GO:0006099">
    <property type="term" value="P:tricarboxylic acid cycle"/>
    <property type="evidence" value="ECO:0007669"/>
    <property type="project" value="UniProtKB-UniRule"/>
</dbReference>
<dbReference type="CDD" id="cd01337">
    <property type="entry name" value="MDH_glyoxysomal_mitochondrial"/>
    <property type="match status" value="1"/>
</dbReference>
<dbReference type="FunFam" id="3.40.50.720:FF:000017">
    <property type="entry name" value="Malate dehydrogenase"/>
    <property type="match status" value="1"/>
</dbReference>
<dbReference type="FunFam" id="3.90.110.10:FF:000001">
    <property type="entry name" value="Malate dehydrogenase"/>
    <property type="match status" value="1"/>
</dbReference>
<dbReference type="Gene3D" id="3.90.110.10">
    <property type="entry name" value="Lactate dehydrogenase/glycoside hydrolase, family 4, C-terminal"/>
    <property type="match status" value="1"/>
</dbReference>
<dbReference type="Gene3D" id="3.40.50.720">
    <property type="entry name" value="NAD(P)-binding Rossmann-like Domain"/>
    <property type="match status" value="1"/>
</dbReference>
<dbReference type="HAMAP" id="MF_01516">
    <property type="entry name" value="Malate_dehydrog_1"/>
    <property type="match status" value="1"/>
</dbReference>
<dbReference type="InterPro" id="IPR001557">
    <property type="entry name" value="L-lactate/malate_DH"/>
</dbReference>
<dbReference type="InterPro" id="IPR022383">
    <property type="entry name" value="Lactate/malate_DH_C"/>
</dbReference>
<dbReference type="InterPro" id="IPR001236">
    <property type="entry name" value="Lactate/malate_DH_N"/>
</dbReference>
<dbReference type="InterPro" id="IPR015955">
    <property type="entry name" value="Lactate_DH/Glyco_Ohase_4_C"/>
</dbReference>
<dbReference type="InterPro" id="IPR001252">
    <property type="entry name" value="Malate_DH_AS"/>
</dbReference>
<dbReference type="InterPro" id="IPR010097">
    <property type="entry name" value="Malate_DH_type1"/>
</dbReference>
<dbReference type="InterPro" id="IPR023958">
    <property type="entry name" value="Malate_DH_type1_bac"/>
</dbReference>
<dbReference type="InterPro" id="IPR036291">
    <property type="entry name" value="NAD(P)-bd_dom_sf"/>
</dbReference>
<dbReference type="NCBIfam" id="TIGR01772">
    <property type="entry name" value="MDH_euk_gproteo"/>
    <property type="match status" value="1"/>
</dbReference>
<dbReference type="PANTHER" id="PTHR11540">
    <property type="entry name" value="MALATE AND LACTATE DEHYDROGENASE"/>
    <property type="match status" value="1"/>
</dbReference>
<dbReference type="PANTHER" id="PTHR11540:SF16">
    <property type="entry name" value="MALATE DEHYDROGENASE, MITOCHONDRIAL"/>
    <property type="match status" value="1"/>
</dbReference>
<dbReference type="Pfam" id="PF02866">
    <property type="entry name" value="Ldh_1_C"/>
    <property type="match status" value="1"/>
</dbReference>
<dbReference type="Pfam" id="PF00056">
    <property type="entry name" value="Ldh_1_N"/>
    <property type="match status" value="1"/>
</dbReference>
<dbReference type="PIRSF" id="PIRSF000102">
    <property type="entry name" value="Lac_mal_DH"/>
    <property type="match status" value="1"/>
</dbReference>
<dbReference type="SUPFAM" id="SSF56327">
    <property type="entry name" value="LDH C-terminal domain-like"/>
    <property type="match status" value="1"/>
</dbReference>
<dbReference type="SUPFAM" id="SSF51735">
    <property type="entry name" value="NAD(P)-binding Rossmann-fold domains"/>
    <property type="match status" value="1"/>
</dbReference>
<dbReference type="PROSITE" id="PS00068">
    <property type="entry name" value="MDH"/>
    <property type="match status" value="1"/>
</dbReference>
<name>MDH_IDILO</name>
<gene>
    <name evidence="1" type="primary">mdh</name>
    <name type="ordered locus">IL0472</name>
</gene>
<accession>Q5R030</accession>
<sequence length="310" mass="32244">MKVAVLGAAGGIGQALSLLLKTQLPAGSELSLYDVAPVVPGVAVDLSHIPTDVKVTGFGKDDLASALVGSDIVLIPAGVPRKPGMDRSDLFNMNAGIVKNLVQGVADNCPNACVGIITNPVNTTVPIAAEVLKKAGCYDKRKLFGVTTLDVIRSEAFVGELRGLNPENVNVPVIGGHSGTTILPLLSQVEGVEFTEQEIKDLTHRIQNAGTEVVEAKAGGGSATLSMGQAAARFALSLLKGLQGQDTIECTYVEGPGDNAKFFAQPVRLGKNGAEEILSYGKLSAFEQKCMDEMLDGLKGDIQTGIDFAS</sequence>
<organism>
    <name type="scientific">Idiomarina loihiensis (strain ATCC BAA-735 / DSM 15497 / L2-TR)</name>
    <dbReference type="NCBI Taxonomy" id="283942"/>
    <lineage>
        <taxon>Bacteria</taxon>
        <taxon>Pseudomonadati</taxon>
        <taxon>Pseudomonadota</taxon>
        <taxon>Gammaproteobacteria</taxon>
        <taxon>Alteromonadales</taxon>
        <taxon>Idiomarinaceae</taxon>
        <taxon>Idiomarina</taxon>
    </lineage>
</organism>
<evidence type="ECO:0000255" key="1">
    <source>
        <dbReference type="HAMAP-Rule" id="MF_01516"/>
    </source>
</evidence>
<feature type="chain" id="PRO_0000113308" description="Malate dehydrogenase">
    <location>
        <begin position="1"/>
        <end position="310"/>
    </location>
</feature>
<feature type="active site" description="Proton acceptor" evidence="1">
    <location>
        <position position="177"/>
    </location>
</feature>
<feature type="binding site" evidence="1">
    <location>
        <begin position="7"/>
        <end position="13"/>
    </location>
    <ligand>
        <name>NAD(+)</name>
        <dbReference type="ChEBI" id="CHEBI:57540"/>
    </ligand>
</feature>
<feature type="binding site" evidence="1">
    <location>
        <position position="34"/>
    </location>
    <ligand>
        <name>NAD(+)</name>
        <dbReference type="ChEBI" id="CHEBI:57540"/>
    </ligand>
</feature>
<feature type="binding site" evidence="1">
    <location>
        <position position="81"/>
    </location>
    <ligand>
        <name>substrate</name>
    </ligand>
</feature>
<feature type="binding site" evidence="1">
    <location>
        <position position="87"/>
    </location>
    <ligand>
        <name>substrate</name>
    </ligand>
</feature>
<feature type="binding site" evidence="1">
    <location>
        <position position="94"/>
    </location>
    <ligand>
        <name>NAD(+)</name>
        <dbReference type="ChEBI" id="CHEBI:57540"/>
    </ligand>
</feature>
<feature type="binding site" evidence="1">
    <location>
        <begin position="117"/>
        <end position="119"/>
    </location>
    <ligand>
        <name>NAD(+)</name>
        <dbReference type="ChEBI" id="CHEBI:57540"/>
    </ligand>
</feature>
<feature type="binding site" evidence="1">
    <location>
        <position position="119"/>
    </location>
    <ligand>
        <name>substrate</name>
    </ligand>
</feature>
<feature type="binding site" evidence="1">
    <location>
        <position position="153"/>
    </location>
    <ligand>
        <name>substrate</name>
    </ligand>
</feature>
<feature type="binding site" evidence="1">
    <location>
        <position position="227"/>
    </location>
    <ligand>
        <name>NAD(+)</name>
        <dbReference type="ChEBI" id="CHEBI:57540"/>
    </ligand>
</feature>
<reference key="1">
    <citation type="journal article" date="2004" name="Proc. Natl. Acad. Sci. U.S.A.">
        <title>Genome sequence of the deep-sea gamma-proteobacterium Idiomarina loihiensis reveals amino acid fermentation as a source of carbon and energy.</title>
        <authorList>
            <person name="Hou S."/>
            <person name="Saw J.H."/>
            <person name="Lee K.S."/>
            <person name="Freitas T.A."/>
            <person name="Belisle C."/>
            <person name="Kawarabayasi Y."/>
            <person name="Donachie S.P."/>
            <person name="Pikina A."/>
            <person name="Galperin M.Y."/>
            <person name="Koonin E.V."/>
            <person name="Makarova K.S."/>
            <person name="Omelchenko M.V."/>
            <person name="Sorokin A."/>
            <person name="Wolf Y.I."/>
            <person name="Li Q.X."/>
            <person name="Keum Y.S."/>
            <person name="Campbell S."/>
            <person name="Denery J."/>
            <person name="Aizawa S."/>
            <person name="Shibata S."/>
            <person name="Malahoff A."/>
            <person name="Alam M."/>
        </authorList>
    </citation>
    <scope>NUCLEOTIDE SEQUENCE [LARGE SCALE GENOMIC DNA]</scope>
    <source>
        <strain>ATCC BAA-735 / DSM 15497 / L2-TR</strain>
    </source>
</reference>
<proteinExistence type="inferred from homology"/>